<sequence length="446" mass="49141">MSSQFTTPVVTEMQVIPVAGHDSMLMNLSGAHAPFFTRNIVIIKDNSGHTGVGEIPGGEKIRKTLEDAIPLVVGKTLGEYKNVLTLVRNTFADRDAGGRGLQTFDLRTTIHVVTGIEAAMLDLLGQHLGVNVASLLGDGQQRSEVEMLGYLFFVGNRKATPLPYQSQPDDSCDWYRLRHEEAMTPDAVVRLAEAAYEKYGFNDFKLKGGVLAGEEEAESIVALAQRFPQARITLDPNGAWSLNEAIKIGKYLKGSLAYAEDPCGAEQGFSGREVMAEFRRATGLPTATNMIATDWRQMGHTLSLQSVDIPLADPHFWTMQGSVRVAQMCHEFGLTWGSHSNNHFDISLAMFTHVAAAAPGKITAIDTHWIWQEGNQRLTKEPFEIKGGLVQVPEKPGLGVEIDMDQVMKAHELYQKHGLGARDDAMGMQYLIPGWTFDNKRPCMVR</sequence>
<evidence type="ECO:0000269" key="1">
    <source>
    </source>
</evidence>
<evidence type="ECO:0000269" key="2">
    <source>
    </source>
</evidence>
<evidence type="ECO:0000269" key="3">
    <source>
    </source>
</evidence>
<evidence type="ECO:0000303" key="4">
    <source>
    </source>
</evidence>
<evidence type="ECO:0000305" key="5"/>
<evidence type="ECO:0007829" key="6">
    <source>
        <dbReference type="PDB" id="1EC7"/>
    </source>
</evidence>
<evidence type="ECO:0007829" key="7">
    <source>
        <dbReference type="PDB" id="1EC8"/>
    </source>
</evidence>
<evidence type="ECO:0007829" key="8">
    <source>
        <dbReference type="PDB" id="1ECQ"/>
    </source>
</evidence>
<dbReference type="EC" id="4.2.1.40" evidence="3"/>
<dbReference type="EMBL" id="U00096">
    <property type="protein sequence ID" value="AAC75829.1"/>
    <property type="molecule type" value="Genomic_DNA"/>
</dbReference>
<dbReference type="EMBL" id="U29581">
    <property type="protein sequence ID" value="AAB40437.1"/>
    <property type="molecule type" value="Genomic_DNA"/>
</dbReference>
<dbReference type="EMBL" id="AP009048">
    <property type="protein sequence ID" value="BAA16572.2"/>
    <property type="molecule type" value="Genomic_DNA"/>
</dbReference>
<dbReference type="PIR" id="G65060">
    <property type="entry name" value="G65060"/>
</dbReference>
<dbReference type="RefSeq" id="NP_417267.1">
    <property type="nucleotide sequence ID" value="NC_000913.3"/>
</dbReference>
<dbReference type="RefSeq" id="WP_000098255.1">
    <property type="nucleotide sequence ID" value="NZ_LN832404.1"/>
</dbReference>
<dbReference type="PDB" id="1EC7">
    <property type="method" value="X-ray"/>
    <property type="resolution" value="1.90 A"/>
    <property type="chains" value="A/B/C/D=1-446"/>
</dbReference>
<dbReference type="PDB" id="1EC8">
    <property type="method" value="X-ray"/>
    <property type="resolution" value="1.90 A"/>
    <property type="chains" value="A/B/C/D=1-446"/>
</dbReference>
<dbReference type="PDB" id="1EC9">
    <property type="method" value="X-ray"/>
    <property type="resolution" value="2.00 A"/>
    <property type="chains" value="A/B/C/D=1-446"/>
</dbReference>
<dbReference type="PDB" id="1ECQ">
    <property type="method" value="X-ray"/>
    <property type="resolution" value="2.00 A"/>
    <property type="chains" value="A/B/C/D=1-446"/>
</dbReference>
<dbReference type="PDB" id="1JCT">
    <property type="method" value="X-ray"/>
    <property type="resolution" value="2.75 A"/>
    <property type="chains" value="A/B=1-446"/>
</dbReference>
<dbReference type="PDB" id="1JDF">
    <property type="method" value="X-ray"/>
    <property type="resolution" value="2.00 A"/>
    <property type="chains" value="A/B/C/D=1-446"/>
</dbReference>
<dbReference type="PDB" id="3PWG">
    <property type="method" value="X-ray"/>
    <property type="resolution" value="2.00 A"/>
    <property type="chains" value="A/B/C/D=1-446"/>
</dbReference>
<dbReference type="PDB" id="3PWI">
    <property type="method" value="X-ray"/>
    <property type="resolution" value="2.23 A"/>
    <property type="chains" value="A/B=1-446"/>
</dbReference>
<dbReference type="PDB" id="4GYP">
    <property type="method" value="X-ray"/>
    <property type="resolution" value="2.10 A"/>
    <property type="chains" value="A/B=1-446"/>
</dbReference>
<dbReference type="PDBsum" id="1EC7"/>
<dbReference type="PDBsum" id="1EC8"/>
<dbReference type="PDBsum" id="1EC9"/>
<dbReference type="PDBsum" id="1ECQ"/>
<dbReference type="PDBsum" id="1JCT"/>
<dbReference type="PDBsum" id="1JDF"/>
<dbReference type="PDBsum" id="3PWG"/>
<dbReference type="PDBsum" id="3PWI"/>
<dbReference type="PDBsum" id="4GYP"/>
<dbReference type="SMR" id="P0AES2"/>
<dbReference type="BioGRID" id="4262287">
    <property type="interactions" value="15"/>
</dbReference>
<dbReference type="FunCoup" id="P0AES2">
    <property type="interactions" value="139"/>
</dbReference>
<dbReference type="IntAct" id="P0AES2">
    <property type="interactions" value="3"/>
</dbReference>
<dbReference type="STRING" id="511145.b2787"/>
<dbReference type="DrugBank" id="DB03237">
    <property type="generic name" value="2,3-Dihydroxy-5-Oxo-Hexanedioate"/>
</dbReference>
<dbReference type="DrugBank" id="DB03212">
    <property type="generic name" value="4-Deoxyglucarate"/>
</dbReference>
<dbReference type="DrugBank" id="DB03603">
    <property type="generic name" value="Glucaric acid"/>
</dbReference>
<dbReference type="DrugBank" id="DB03734">
    <property type="generic name" value="Xylarohydroxamate"/>
</dbReference>
<dbReference type="jPOST" id="P0AES2"/>
<dbReference type="PaxDb" id="511145-b2787"/>
<dbReference type="EnsemblBacteria" id="AAC75829">
    <property type="protein sequence ID" value="AAC75829"/>
    <property type="gene ID" value="b2787"/>
</dbReference>
<dbReference type="GeneID" id="947258"/>
<dbReference type="KEGG" id="ecj:JW2758"/>
<dbReference type="KEGG" id="eco:b2787"/>
<dbReference type="KEGG" id="ecoc:C3026_15325"/>
<dbReference type="PATRIC" id="fig|1411691.4.peg.3947"/>
<dbReference type="EchoBASE" id="EB2959"/>
<dbReference type="eggNOG" id="COG4948">
    <property type="taxonomic scope" value="Bacteria"/>
</dbReference>
<dbReference type="HOGENOM" id="CLU_030273_9_0_6"/>
<dbReference type="InParanoid" id="P0AES2"/>
<dbReference type="OMA" id="MQYLIPN"/>
<dbReference type="OrthoDB" id="193563at2"/>
<dbReference type="PhylomeDB" id="P0AES2"/>
<dbReference type="BioCyc" id="EcoCyc:GLUCARDEHYDRA-MONOMER"/>
<dbReference type="BioCyc" id="MetaCyc:GLUCARDEHYDRA-MONOMER"/>
<dbReference type="BRENDA" id="4.2.1.40">
    <property type="organism ID" value="2026"/>
</dbReference>
<dbReference type="SABIO-RK" id="P0AES2"/>
<dbReference type="UniPathway" id="UPA00564">
    <property type="reaction ID" value="UER00627"/>
</dbReference>
<dbReference type="EvolutionaryTrace" id="P0AES2"/>
<dbReference type="PRO" id="PR:P0AES2"/>
<dbReference type="Proteomes" id="UP000000625">
    <property type="component" value="Chromosome"/>
</dbReference>
<dbReference type="GO" id="GO:0008872">
    <property type="term" value="F:glucarate dehydratase activity"/>
    <property type="evidence" value="ECO:0000314"/>
    <property type="project" value="UniProtKB"/>
</dbReference>
<dbReference type="GO" id="GO:0000287">
    <property type="term" value="F:magnesium ion binding"/>
    <property type="evidence" value="ECO:0000314"/>
    <property type="project" value="UniProtKB"/>
</dbReference>
<dbReference type="GO" id="GO:0042838">
    <property type="term" value="P:D-glucarate catabolic process"/>
    <property type="evidence" value="ECO:0000314"/>
    <property type="project" value="UniProtKB"/>
</dbReference>
<dbReference type="CDD" id="cd03323">
    <property type="entry name" value="D-glucarate_dehydratase"/>
    <property type="match status" value="1"/>
</dbReference>
<dbReference type="FunFam" id="3.20.20.120:FF:000003">
    <property type="entry name" value="Glucarate dehydratase"/>
    <property type="match status" value="1"/>
</dbReference>
<dbReference type="Gene3D" id="3.20.20.120">
    <property type="entry name" value="Enolase-like C-terminal domain"/>
    <property type="match status" value="1"/>
</dbReference>
<dbReference type="Gene3D" id="3.30.390.10">
    <property type="entry name" value="Enolase-like, N-terminal domain"/>
    <property type="match status" value="1"/>
</dbReference>
<dbReference type="InterPro" id="IPR034593">
    <property type="entry name" value="DgoD-like"/>
</dbReference>
<dbReference type="InterPro" id="IPR036849">
    <property type="entry name" value="Enolase-like_C_sf"/>
</dbReference>
<dbReference type="InterPro" id="IPR029017">
    <property type="entry name" value="Enolase-like_N"/>
</dbReference>
<dbReference type="InterPro" id="IPR029065">
    <property type="entry name" value="Enolase_C-like"/>
</dbReference>
<dbReference type="InterPro" id="IPR017653">
    <property type="entry name" value="Glucarate_dehydratase"/>
</dbReference>
<dbReference type="InterPro" id="IPR034598">
    <property type="entry name" value="GlucD-like"/>
</dbReference>
<dbReference type="InterPro" id="IPR013342">
    <property type="entry name" value="Mandelate_racemase_C"/>
</dbReference>
<dbReference type="NCBIfam" id="TIGR03247">
    <property type="entry name" value="glucar-dehydr"/>
    <property type="match status" value="1"/>
</dbReference>
<dbReference type="PANTHER" id="PTHR48080">
    <property type="entry name" value="D-GALACTONATE DEHYDRATASE-RELATED"/>
    <property type="match status" value="1"/>
</dbReference>
<dbReference type="PANTHER" id="PTHR48080:SF4">
    <property type="entry name" value="GLUCARATE DEHYDRATASE"/>
    <property type="match status" value="1"/>
</dbReference>
<dbReference type="Pfam" id="PF13378">
    <property type="entry name" value="MR_MLE_C"/>
    <property type="match status" value="1"/>
</dbReference>
<dbReference type="SFLD" id="SFLDS00001">
    <property type="entry name" value="Enolase"/>
    <property type="match status" value="1"/>
</dbReference>
<dbReference type="SFLD" id="SFLDF00005">
    <property type="entry name" value="glucarate_dehydratase"/>
    <property type="match status" value="1"/>
</dbReference>
<dbReference type="SMART" id="SM00922">
    <property type="entry name" value="MR_MLE"/>
    <property type="match status" value="1"/>
</dbReference>
<dbReference type="SUPFAM" id="SSF51604">
    <property type="entry name" value="Enolase C-terminal domain-like"/>
    <property type="match status" value="1"/>
</dbReference>
<dbReference type="SUPFAM" id="SSF54826">
    <property type="entry name" value="Enolase N-terminal domain-like"/>
    <property type="match status" value="1"/>
</dbReference>
<protein>
    <recommendedName>
        <fullName>Glucarate dehydratase</fullName>
        <shortName>GDH</shortName>
        <shortName>GlucD</shortName>
        <ecNumber evidence="3">4.2.1.40</ecNumber>
    </recommendedName>
    <alternativeName>
        <fullName evidence="4">D-glucarate dehydratase</fullName>
    </alternativeName>
</protein>
<accession>P0AES2</accession>
<accession>P76637</accession>
<accession>P78217</accession>
<accession>Q46914</accession>
<proteinExistence type="evidence at protein level"/>
<feature type="initiator methionine" description="Removed" evidence="3">
    <location>
        <position position="1"/>
    </location>
</feature>
<feature type="chain" id="PRO_0000171264" description="Glucarate dehydratase">
    <location>
        <begin position="2"/>
        <end position="446"/>
    </location>
</feature>
<feature type="active site" description="Proton acceptor" evidence="2">
    <location>
        <position position="207"/>
    </location>
</feature>
<feature type="active site" description="Proton acceptor" evidence="2">
    <location>
        <position position="339"/>
    </location>
</feature>
<feature type="binding site">
    <location>
        <position position="32"/>
    </location>
    <ligand>
        <name>substrate</name>
    </ligand>
</feature>
<feature type="binding site">
    <location>
        <position position="103"/>
    </location>
    <ligand>
        <name>substrate</name>
    </ligand>
</feature>
<feature type="binding site">
    <location>
        <position position="150"/>
    </location>
    <ligand>
        <name>substrate</name>
    </ligand>
</feature>
<feature type="binding site">
    <location>
        <position position="205"/>
    </location>
    <ligand>
        <name>substrate</name>
    </ligand>
</feature>
<feature type="binding site">
    <location>
        <begin position="235"/>
        <end position="237"/>
    </location>
    <ligand>
        <name>substrate</name>
    </ligand>
</feature>
<feature type="binding site" evidence="2">
    <location>
        <position position="235"/>
    </location>
    <ligand>
        <name>Mg(2+)</name>
        <dbReference type="ChEBI" id="CHEBI:18420"/>
    </ligand>
</feature>
<feature type="binding site" evidence="2">
    <location>
        <position position="266"/>
    </location>
    <ligand>
        <name>Mg(2+)</name>
        <dbReference type="ChEBI" id="CHEBI:18420"/>
    </ligand>
</feature>
<feature type="binding site" evidence="2">
    <location>
        <position position="289"/>
    </location>
    <ligand>
        <name>Mg(2+)</name>
        <dbReference type="ChEBI" id="CHEBI:18420"/>
    </ligand>
</feature>
<feature type="binding site">
    <location>
        <position position="289"/>
    </location>
    <ligand>
        <name>substrate</name>
    </ligand>
</feature>
<feature type="binding site">
    <location>
        <begin position="339"/>
        <end position="341"/>
    </location>
    <ligand>
        <name>substrate</name>
    </ligand>
</feature>
<feature type="binding site">
    <location>
        <position position="368"/>
    </location>
    <ligand>
        <name>substrate</name>
    </ligand>
</feature>
<feature type="binding site">
    <location>
        <position position="422"/>
    </location>
    <ligand>
        <name>substrate</name>
    </ligand>
</feature>
<feature type="mutagenesis site" description="Reduces activity 100-fold." evidence="1">
    <original>Y</original>
    <variation>F</variation>
    <location>
        <position position="150"/>
    </location>
</feature>
<feature type="mutagenesis site" description="Reduces activity 1000-fold." evidence="1">
    <original>K</original>
    <variation>Q</variation>
    <location>
        <position position="207"/>
    </location>
</feature>
<feature type="mutagenesis site" description="Reduces activity 10000-fold." evidence="1">
    <original>K</original>
    <variation>R</variation>
    <location>
        <position position="207"/>
    </location>
</feature>
<feature type="mutagenesis site" description="Loss of activity." evidence="1">
    <original>H</original>
    <variation>A</variation>
    <location>
        <position position="339"/>
    </location>
</feature>
<feature type="mutagenesis site" description="Reduces activity 10000-fold." evidence="1">
    <original>H</original>
    <variation>N</variation>
    <location>
        <position position="339"/>
    </location>
</feature>
<feature type="mutagenesis site" description="Reduces activity 1000-fold." evidence="1">
    <original>H</original>
    <variation>Q</variation>
    <location>
        <position position="339"/>
    </location>
</feature>
<feature type="mutagenesis site" description="Inactive in the dehydration reaction of D-glucarate, L-idarate, and 4F-Gluc." evidence="2">
    <original>N</original>
    <variation>D</variation>
    <location>
        <position position="341"/>
    </location>
</feature>
<feature type="mutagenesis site" description="Almost no effect on the dehydration reaction of D-glucarate, L-idarate, and 4F-Gluc." evidence="2">
    <original>N</original>
    <variation>L</variation>
    <location>
        <position position="341"/>
    </location>
</feature>
<feature type="mutagenesis site" description="Reduces activity over 100-fold." evidence="1">
    <original>D</original>
    <variation>A</variation>
    <variation>N</variation>
    <location>
        <position position="366"/>
    </location>
</feature>
<feature type="sequence conflict" description="In Ref. 1; AAB40437." evidence="5" ref="1">
    <original>PLAD</original>
    <variation>RWRI</variation>
    <location>
        <begin position="310"/>
        <end position="313"/>
    </location>
</feature>
<feature type="strand" evidence="6">
    <location>
        <begin position="9"/>
        <end position="21"/>
    </location>
</feature>
<feature type="strand" evidence="6">
    <location>
        <begin position="25"/>
        <end position="27"/>
    </location>
</feature>
<feature type="strand" evidence="6">
    <location>
        <begin position="34"/>
        <end position="45"/>
    </location>
</feature>
<feature type="strand" evidence="6">
    <location>
        <begin position="50"/>
        <end position="56"/>
    </location>
</feature>
<feature type="helix" evidence="6">
    <location>
        <begin position="59"/>
        <end position="72"/>
    </location>
</feature>
<feature type="helix" evidence="6">
    <location>
        <begin position="77"/>
        <end position="79"/>
    </location>
</feature>
<feature type="helix" evidence="6">
    <location>
        <begin position="80"/>
        <end position="90"/>
    </location>
</feature>
<feature type="helix" evidence="7">
    <location>
        <begin position="92"/>
        <end position="95"/>
    </location>
</feature>
<feature type="turn" evidence="7">
    <location>
        <begin position="96"/>
        <end position="99"/>
    </location>
</feature>
<feature type="strand" evidence="6">
    <location>
        <begin position="101"/>
        <end position="104"/>
    </location>
</feature>
<feature type="helix" evidence="6">
    <location>
        <begin position="109"/>
        <end position="128"/>
    </location>
</feature>
<feature type="strand" evidence="8">
    <location>
        <begin position="130"/>
        <end position="132"/>
    </location>
</feature>
<feature type="helix" evidence="6">
    <location>
        <begin position="133"/>
        <end position="135"/>
    </location>
</feature>
<feature type="strand" evidence="6">
    <location>
        <begin position="143"/>
        <end position="147"/>
    </location>
</feature>
<feature type="strand" evidence="6">
    <location>
        <begin position="149"/>
        <end position="152"/>
    </location>
</feature>
<feature type="helix" evidence="6">
    <location>
        <begin position="157"/>
        <end position="159"/>
    </location>
</feature>
<feature type="strand" evidence="6">
    <location>
        <begin position="160"/>
        <end position="162"/>
    </location>
</feature>
<feature type="helix" evidence="6">
    <location>
        <begin position="173"/>
        <end position="177"/>
    </location>
</feature>
<feature type="helix" evidence="6">
    <location>
        <begin position="185"/>
        <end position="199"/>
    </location>
</feature>
<feature type="strand" evidence="6">
    <location>
        <begin position="202"/>
        <end position="207"/>
    </location>
</feature>
<feature type="strand" evidence="6">
    <location>
        <begin position="209"/>
        <end position="211"/>
    </location>
</feature>
<feature type="helix" evidence="6">
    <location>
        <begin position="213"/>
        <end position="226"/>
    </location>
</feature>
<feature type="strand" evidence="6">
    <location>
        <begin position="230"/>
        <end position="235"/>
    </location>
</feature>
<feature type="helix" evidence="6">
    <location>
        <begin position="242"/>
        <end position="251"/>
    </location>
</feature>
<feature type="turn" evidence="6">
    <location>
        <begin position="252"/>
        <end position="255"/>
    </location>
</feature>
<feature type="strand" evidence="6">
    <location>
        <begin position="256"/>
        <end position="261"/>
    </location>
</feature>
<feature type="helix" evidence="6">
    <location>
        <begin position="271"/>
        <end position="282"/>
    </location>
</feature>
<feature type="strand" evidence="6">
    <location>
        <begin position="286"/>
        <end position="291"/>
    </location>
</feature>
<feature type="helix" evidence="6">
    <location>
        <begin position="295"/>
        <end position="304"/>
    </location>
</feature>
<feature type="strand" evidence="6">
    <location>
        <begin position="308"/>
        <end position="311"/>
    </location>
</feature>
<feature type="helix" evidence="6">
    <location>
        <begin position="314"/>
        <end position="317"/>
    </location>
</feature>
<feature type="helix" evidence="6">
    <location>
        <begin position="319"/>
        <end position="331"/>
    </location>
</feature>
<feature type="helix" evidence="6">
    <location>
        <begin position="345"/>
        <end position="356"/>
    </location>
</feature>
<feature type="helix" evidence="6">
    <location>
        <begin position="369"/>
        <end position="372"/>
    </location>
</feature>
<feature type="turn" evidence="6">
    <location>
        <begin position="373"/>
        <end position="375"/>
    </location>
</feature>
<feature type="strand" evidence="6">
    <location>
        <begin position="378"/>
        <end position="381"/>
    </location>
</feature>
<feature type="strand" evidence="6">
    <location>
        <begin position="389"/>
        <end position="391"/>
    </location>
</feature>
<feature type="strand" evidence="6">
    <location>
        <begin position="395"/>
        <end position="397"/>
    </location>
</feature>
<feature type="helix" evidence="6">
    <location>
        <begin position="404"/>
        <end position="416"/>
    </location>
</feature>
<feature type="helix" evidence="6">
    <location>
        <begin position="425"/>
        <end position="429"/>
    </location>
</feature>
<comment type="function">
    <text evidence="2 3">Catalyzes the dehydration of glucarate or L-idarate to 5-keto-4-deoxy-D-glucarate (5-kdGluc) (PubMed:9772162). Also catalyzes the epimerization of D-glucarate and L-idarate (PubMed:11513584).</text>
</comment>
<comment type="catalytic activity">
    <reaction evidence="3">
        <text>D-glucarate = 5-dehydro-4-deoxy-D-glucarate + H2O</text>
        <dbReference type="Rhea" id="RHEA:14573"/>
        <dbReference type="ChEBI" id="CHEBI:15377"/>
        <dbReference type="ChEBI" id="CHEBI:30612"/>
        <dbReference type="ChEBI" id="CHEBI:42819"/>
        <dbReference type="EC" id="4.2.1.40"/>
    </reaction>
</comment>
<comment type="cofactor">
    <cofactor evidence="1">
        <name>Mg(2+)</name>
        <dbReference type="ChEBI" id="CHEBI:18420"/>
    </cofactor>
</comment>
<comment type="biophysicochemical properties">
    <kinetics>
        <KM evidence="3">16 uM for idarate</KM>
        <KM evidence="3">60 uM for glucarate</KM>
    </kinetics>
</comment>
<comment type="pathway">
    <text>Carbohydrate acid metabolism; D-glucarate degradation; 2,5-dioxopentanoate from D-glucarate: step 1/2.</text>
</comment>
<comment type="subunit">
    <text evidence="1 2">Homodimer.</text>
</comment>
<comment type="similarity">
    <text evidence="5">Belongs to the mandelate racemase/muconate lactonizing enzyme family. GlucD subfamily.</text>
</comment>
<reference key="1">
    <citation type="journal article" date="1997" name="Science">
        <title>The complete genome sequence of Escherichia coli K-12.</title>
        <authorList>
            <person name="Blattner F.R."/>
            <person name="Plunkett G. III"/>
            <person name="Bloch C.A."/>
            <person name="Perna N.T."/>
            <person name="Burland V."/>
            <person name="Riley M."/>
            <person name="Collado-Vides J."/>
            <person name="Glasner J.D."/>
            <person name="Rode C.K."/>
            <person name="Mayhew G.F."/>
            <person name="Gregor J."/>
            <person name="Davis N.W."/>
            <person name="Kirkpatrick H.A."/>
            <person name="Goeden M.A."/>
            <person name="Rose D.J."/>
            <person name="Mau B."/>
            <person name="Shao Y."/>
        </authorList>
    </citation>
    <scope>NUCLEOTIDE SEQUENCE [LARGE SCALE GENOMIC DNA]</scope>
    <source>
        <strain>K12 / MG1655 / ATCC 47076</strain>
    </source>
</reference>
<reference key="2">
    <citation type="journal article" date="2006" name="Mol. Syst. Biol.">
        <title>Highly accurate genome sequences of Escherichia coli K-12 strains MG1655 and W3110.</title>
        <authorList>
            <person name="Hayashi K."/>
            <person name="Morooka N."/>
            <person name="Yamamoto Y."/>
            <person name="Fujita K."/>
            <person name="Isono K."/>
            <person name="Choi S."/>
            <person name="Ohtsubo E."/>
            <person name="Baba T."/>
            <person name="Wanner B.L."/>
            <person name="Mori H."/>
            <person name="Horiuchi T."/>
        </authorList>
    </citation>
    <scope>NUCLEOTIDE SEQUENCE [LARGE SCALE GENOMIC DNA]</scope>
    <source>
        <strain>K12 / W3110 / ATCC 27325 / DSM 5911</strain>
    </source>
</reference>
<reference key="3">
    <citation type="journal article" date="1997" name="DNA Res.">
        <title>Construction of a contiguous 874-kb sequence of the Escherichia coli-K12 genome corresponding to 50.0-68.8 min on the linkage map and analysis of its sequence features.</title>
        <authorList>
            <person name="Yamamoto Y."/>
            <person name="Aiba H."/>
            <person name="Baba T."/>
            <person name="Hayashi K."/>
            <person name="Inada T."/>
            <person name="Isono K."/>
            <person name="Itoh T."/>
            <person name="Kimura S."/>
            <person name="Kitagawa M."/>
            <person name="Makino K."/>
            <person name="Miki T."/>
            <person name="Mitsuhashi N."/>
            <person name="Mizobuchi K."/>
            <person name="Mori H."/>
            <person name="Nakade S."/>
            <person name="Nakamura Y."/>
            <person name="Nashimoto H."/>
            <person name="Oshima T."/>
            <person name="Oyama S."/>
            <person name="Saito N."/>
            <person name="Sampei G."/>
            <person name="Satoh Y."/>
            <person name="Sivasundaram S."/>
            <person name="Tagami H."/>
            <person name="Takahashi H."/>
            <person name="Takeda J."/>
            <person name="Takemoto K."/>
            <person name="Uehara K."/>
            <person name="Wada C."/>
            <person name="Yamagata S."/>
            <person name="Horiuchi T."/>
        </authorList>
    </citation>
    <scope>NUCLEOTIDE SEQUENCE [LARGE SCALE GENOMIC DNA] OF 315-446</scope>
    <source>
        <strain>K12 / W3110 / ATCC 27325 / DSM 5911</strain>
    </source>
</reference>
<reference key="4">
    <citation type="journal article" date="1998" name="Biochemistry">
        <title>Evolution of enzymatic activities in the enolase superfamily: characterization of the (D)-glucarate/galactarate catabolic pathway in Escherichia coli.</title>
        <authorList>
            <person name="Hubbard B.K."/>
            <person name="Koch M."/>
            <person name="Palmer D.R."/>
            <person name="Babbitt P.C."/>
            <person name="Gerlt J.A."/>
        </authorList>
    </citation>
    <scope>PROTEIN SEQUENCE OF 2-15</scope>
    <scope>BIOPHYSICOCHEMICAL PROPERTIES</scope>
    <scope>CATALYTIC ACTIVITY</scope>
    <scope>FUNCTION</scope>
</reference>
<reference key="5">
    <citation type="journal article" date="2000" name="Biochemistry">
        <title>Evolution of enzymatic activities in the enolase superfamily: crystallographic and mutagenesis studies of the reaction catalyzed by D-glucarate dehydratase from Escherichia coli.</title>
        <authorList>
            <person name="Gulick A.M."/>
            <person name="Hubbard B.K."/>
            <person name="Gerlt J.A."/>
            <person name="Rayment I."/>
        </authorList>
    </citation>
    <scope>X-RAY CRYSTALLOGRAPHY (1.9 ANGSTROMS) IN COMPLEX WITH SUBSTRATE ANALOGS AND MAGNESIUM IONS</scope>
    <scope>MUTAGENESIS OF TYR-150; LYS-207; HIS-339 AND ASP-366</scope>
    <scope>COFACTOR</scope>
    <scope>SUBUNIT</scope>
</reference>
<reference key="6">
    <citation type="journal article" date="2001" name="Biochemistry">
        <title>Evolution of enzymatic activities in the enolase superfamily: identification of the general acid catalyst in the active site of D-glucarate dehydratase from Escherichia coli.</title>
        <authorList>
            <person name="Gulick A.M."/>
            <person name="Hubbard B.K."/>
            <person name="Gerlt J.A."/>
            <person name="Rayment I."/>
        </authorList>
    </citation>
    <scope>X-RAY CRYSTALLOGRAPHY (2.75 ANGSTROMS) OF MUTANT ASN-341 IN COMPLEX WITH SUBSTRATE ANALOGS AND MAGNESIUM IONS</scope>
    <scope>SUBUNIT</scope>
    <scope>FUNCTION</scope>
    <scope>MUTAGENESIS OF ASN-341</scope>
    <scope>ACTIVE SITE</scope>
</reference>
<keyword id="KW-0002">3D-structure</keyword>
<keyword id="KW-0903">Direct protein sequencing</keyword>
<keyword id="KW-0456">Lyase</keyword>
<keyword id="KW-0460">Magnesium</keyword>
<keyword id="KW-0479">Metal-binding</keyword>
<keyword id="KW-1185">Reference proteome</keyword>
<gene>
    <name type="primary">gudD</name>
    <name type="synonym">ygcX</name>
    <name type="ordered locus">b2787</name>
    <name type="ordered locus">JW2758</name>
</gene>
<name>GUDD_ECOLI</name>
<organism>
    <name type="scientific">Escherichia coli (strain K12)</name>
    <dbReference type="NCBI Taxonomy" id="83333"/>
    <lineage>
        <taxon>Bacteria</taxon>
        <taxon>Pseudomonadati</taxon>
        <taxon>Pseudomonadota</taxon>
        <taxon>Gammaproteobacteria</taxon>
        <taxon>Enterobacterales</taxon>
        <taxon>Enterobacteriaceae</taxon>
        <taxon>Escherichia</taxon>
    </lineage>
</organism>